<keyword id="KW-0240">DNA-directed RNA polymerase</keyword>
<keyword id="KW-0460">Magnesium</keyword>
<keyword id="KW-0479">Metal-binding</keyword>
<keyword id="KW-0548">Nucleotidyltransferase</keyword>
<keyword id="KW-0804">Transcription</keyword>
<keyword id="KW-0808">Transferase</keyword>
<keyword id="KW-0862">Zinc</keyword>
<evidence type="ECO:0000255" key="1">
    <source>
        <dbReference type="HAMAP-Rule" id="MF_01322"/>
    </source>
</evidence>
<evidence type="ECO:0000305" key="2"/>
<gene>
    <name evidence="1" type="primary">rpoC</name>
</gene>
<feature type="chain" id="PRO_0000067775" description="DNA-directed RNA polymerase subunit beta'">
    <location>
        <begin position="1" status="less than"/>
        <end position="1159" status="greater than"/>
    </location>
</feature>
<feature type="binding site" evidence="1">
    <location>
        <position position="398"/>
    </location>
    <ligand>
        <name>Mg(2+)</name>
        <dbReference type="ChEBI" id="CHEBI:18420"/>
    </ligand>
</feature>
<feature type="binding site" evidence="1">
    <location>
        <position position="400"/>
    </location>
    <ligand>
        <name>Mg(2+)</name>
        <dbReference type="ChEBI" id="CHEBI:18420"/>
    </ligand>
</feature>
<feature type="binding site" evidence="1">
    <location>
        <position position="402"/>
    </location>
    <ligand>
        <name>Mg(2+)</name>
        <dbReference type="ChEBI" id="CHEBI:18420"/>
    </ligand>
</feature>
<feature type="binding site" evidence="1">
    <location>
        <position position="741"/>
    </location>
    <ligand>
        <name>Zn(2+)</name>
        <dbReference type="ChEBI" id="CHEBI:29105"/>
    </ligand>
</feature>
<feature type="binding site" evidence="1">
    <location>
        <position position="815"/>
    </location>
    <ligand>
        <name>Zn(2+)</name>
        <dbReference type="ChEBI" id="CHEBI:29105"/>
    </ligand>
</feature>
<feature type="binding site" evidence="1">
    <location>
        <position position="822"/>
    </location>
    <ligand>
        <name>Zn(2+)</name>
        <dbReference type="ChEBI" id="CHEBI:29105"/>
    </ligand>
</feature>
<feature type="binding site" evidence="1">
    <location>
        <position position="825"/>
    </location>
    <ligand>
        <name>Zn(2+)</name>
        <dbReference type="ChEBI" id="CHEBI:29105"/>
    </ligand>
</feature>
<feature type="non-terminal residue">
    <location>
        <position position="1"/>
    </location>
</feature>
<feature type="non-terminal residue">
    <location>
        <position position="1159"/>
    </location>
</feature>
<name>RPOC_PORCN</name>
<dbReference type="EC" id="2.7.7.6" evidence="1"/>
<dbReference type="EMBL" id="X96383">
    <property type="protein sequence ID" value="CAA65247.1"/>
    <property type="molecule type" value="Genomic_DNA"/>
</dbReference>
<dbReference type="SMR" id="O33431"/>
<dbReference type="GO" id="GO:0000428">
    <property type="term" value="C:DNA-directed RNA polymerase complex"/>
    <property type="evidence" value="ECO:0007669"/>
    <property type="project" value="UniProtKB-KW"/>
</dbReference>
<dbReference type="GO" id="GO:0003677">
    <property type="term" value="F:DNA binding"/>
    <property type="evidence" value="ECO:0007669"/>
    <property type="project" value="InterPro"/>
</dbReference>
<dbReference type="GO" id="GO:0003899">
    <property type="term" value="F:DNA-directed RNA polymerase activity"/>
    <property type="evidence" value="ECO:0007669"/>
    <property type="project" value="UniProtKB-EC"/>
</dbReference>
<dbReference type="GO" id="GO:0046872">
    <property type="term" value="F:metal ion binding"/>
    <property type="evidence" value="ECO:0007669"/>
    <property type="project" value="UniProtKB-KW"/>
</dbReference>
<dbReference type="GO" id="GO:0006351">
    <property type="term" value="P:DNA-templated transcription"/>
    <property type="evidence" value="ECO:0007669"/>
    <property type="project" value="InterPro"/>
</dbReference>
<dbReference type="CDD" id="cd01609">
    <property type="entry name" value="RNAP_beta'_N"/>
    <property type="match status" value="1"/>
</dbReference>
<dbReference type="Gene3D" id="1.10.132.30">
    <property type="match status" value="1"/>
</dbReference>
<dbReference type="Gene3D" id="1.10.40.90">
    <property type="match status" value="1"/>
</dbReference>
<dbReference type="Gene3D" id="2.40.40.20">
    <property type="match status" value="1"/>
</dbReference>
<dbReference type="Gene3D" id="2.40.50.100">
    <property type="match status" value="3"/>
</dbReference>
<dbReference type="Gene3D" id="4.10.860.120">
    <property type="entry name" value="RNA polymerase II, clamp domain"/>
    <property type="match status" value="1"/>
</dbReference>
<dbReference type="Gene3D" id="1.10.274.100">
    <property type="entry name" value="RNA polymerase Rpb1, domain 3"/>
    <property type="match status" value="2"/>
</dbReference>
<dbReference type="HAMAP" id="MF_01322">
    <property type="entry name" value="RNApol_bact_RpoC"/>
    <property type="match status" value="1"/>
</dbReference>
<dbReference type="InterPro" id="IPR045867">
    <property type="entry name" value="DNA-dir_RpoC_beta_prime"/>
</dbReference>
<dbReference type="InterPro" id="IPR012754">
    <property type="entry name" value="DNA-dir_RpoC_beta_prime_bact"/>
</dbReference>
<dbReference type="InterPro" id="IPR000722">
    <property type="entry name" value="RNA_pol_asu"/>
</dbReference>
<dbReference type="InterPro" id="IPR006592">
    <property type="entry name" value="RNA_pol_N"/>
</dbReference>
<dbReference type="InterPro" id="IPR007080">
    <property type="entry name" value="RNA_pol_Rpb1_1"/>
</dbReference>
<dbReference type="InterPro" id="IPR007066">
    <property type="entry name" value="RNA_pol_Rpb1_3"/>
</dbReference>
<dbReference type="InterPro" id="IPR042102">
    <property type="entry name" value="RNA_pol_Rpb1_3_sf"/>
</dbReference>
<dbReference type="InterPro" id="IPR007083">
    <property type="entry name" value="RNA_pol_Rpb1_4"/>
</dbReference>
<dbReference type="InterPro" id="IPR007081">
    <property type="entry name" value="RNA_pol_Rpb1_5"/>
</dbReference>
<dbReference type="InterPro" id="IPR044893">
    <property type="entry name" value="RNA_pol_Rpb1_clamp_domain"/>
</dbReference>
<dbReference type="InterPro" id="IPR038120">
    <property type="entry name" value="Rpb1_funnel_sf"/>
</dbReference>
<dbReference type="NCBIfam" id="TIGR02386">
    <property type="entry name" value="rpoC_TIGR"/>
    <property type="match status" value="1"/>
</dbReference>
<dbReference type="PANTHER" id="PTHR19376">
    <property type="entry name" value="DNA-DIRECTED RNA POLYMERASE"/>
    <property type="match status" value="1"/>
</dbReference>
<dbReference type="PANTHER" id="PTHR19376:SF54">
    <property type="entry name" value="DNA-DIRECTED RNA POLYMERASE SUBUNIT BETA"/>
    <property type="match status" value="1"/>
</dbReference>
<dbReference type="Pfam" id="PF04997">
    <property type="entry name" value="RNA_pol_Rpb1_1"/>
    <property type="match status" value="1"/>
</dbReference>
<dbReference type="Pfam" id="PF00623">
    <property type="entry name" value="RNA_pol_Rpb1_2"/>
    <property type="match status" value="2"/>
</dbReference>
<dbReference type="Pfam" id="PF04983">
    <property type="entry name" value="RNA_pol_Rpb1_3"/>
    <property type="match status" value="1"/>
</dbReference>
<dbReference type="Pfam" id="PF05000">
    <property type="entry name" value="RNA_pol_Rpb1_4"/>
    <property type="match status" value="1"/>
</dbReference>
<dbReference type="Pfam" id="PF04998">
    <property type="entry name" value="RNA_pol_Rpb1_5"/>
    <property type="match status" value="1"/>
</dbReference>
<dbReference type="SMART" id="SM00663">
    <property type="entry name" value="RPOLA_N"/>
    <property type="match status" value="1"/>
</dbReference>
<dbReference type="SUPFAM" id="SSF64484">
    <property type="entry name" value="beta and beta-prime subunits of DNA dependent RNA-polymerase"/>
    <property type="match status" value="1"/>
</dbReference>
<proteinExistence type="inferred from homology"/>
<organism>
    <name type="scientific">Porphyromonas cangingivalis</name>
    <dbReference type="NCBI Taxonomy" id="36874"/>
    <lineage>
        <taxon>Bacteria</taxon>
        <taxon>Pseudomonadati</taxon>
        <taxon>Bacteroidota</taxon>
        <taxon>Bacteroidia</taxon>
        <taxon>Bacteroidales</taxon>
        <taxon>Porphyromonadaceae</taxon>
        <taxon>Porphyromonas</taxon>
    </lineage>
</organism>
<comment type="function">
    <text evidence="1">DNA-dependent RNA polymerase catalyzes the transcription of DNA into RNA using the four ribonucleoside triphosphates as substrates.</text>
</comment>
<comment type="catalytic activity">
    <reaction evidence="1">
        <text>RNA(n) + a ribonucleoside 5'-triphosphate = RNA(n+1) + diphosphate</text>
        <dbReference type="Rhea" id="RHEA:21248"/>
        <dbReference type="Rhea" id="RHEA-COMP:14527"/>
        <dbReference type="Rhea" id="RHEA-COMP:17342"/>
        <dbReference type="ChEBI" id="CHEBI:33019"/>
        <dbReference type="ChEBI" id="CHEBI:61557"/>
        <dbReference type="ChEBI" id="CHEBI:140395"/>
        <dbReference type="EC" id="2.7.7.6"/>
    </reaction>
</comment>
<comment type="cofactor">
    <cofactor evidence="1">
        <name>Mg(2+)</name>
        <dbReference type="ChEBI" id="CHEBI:18420"/>
    </cofactor>
    <text evidence="1">Binds 1 Mg(2+) ion per subunit.</text>
</comment>
<comment type="cofactor">
    <cofactor evidence="1">
        <name>Zn(2+)</name>
        <dbReference type="ChEBI" id="CHEBI:29105"/>
    </cofactor>
    <text evidence="1">Binds 1 Zn(2+) ion per subunit.</text>
</comment>
<comment type="subunit">
    <text evidence="1">The RNAP catalytic core consists of 2 alpha, 1 beta, 1 beta' and 1 omega subunit. When a sigma factor is associated with the core the holoenzyme is formed, which can initiate transcription.</text>
</comment>
<comment type="similarity">
    <text evidence="1 2">Belongs to the RNA polymerase beta' chain family.</text>
</comment>
<accession>O33431</accession>
<protein>
    <recommendedName>
        <fullName evidence="1">DNA-directed RNA polymerase subunit beta'</fullName>
        <shortName evidence="1">RNAP subunit beta'</shortName>
        <ecNumber evidence="1">2.7.7.6</ecNumber>
    </recommendedName>
    <alternativeName>
        <fullName evidence="1">RNA polymerase subunit beta'</fullName>
    </alternativeName>
    <alternativeName>
        <fullName evidence="1">Transcriptase subunit beta'</fullName>
    </alternativeName>
</protein>
<reference key="1">
    <citation type="journal article" date="1996" name="Int. J. Syst. Bacteriol.">
        <title>Analysis of the beta' subunit of DNA-dependent RNA polymerase does not support the hypothesis inferred from 16S rRNA analysis that Oenococcus oeni (formerly Leuconostoc oenos) is a tachytelic (fast-evolving) bacterium.</title>
        <authorList>
            <person name="Morse R."/>
            <person name="Collins M.D."/>
            <person name="O'Hanlon K."/>
            <person name="Wallbanks S."/>
            <person name="Richardson P.T."/>
        </authorList>
    </citation>
    <scope>NUCLEOTIDE SEQUENCE [GENOMIC DNA]</scope>
    <source>
        <strain>ATCC 700135 / DSM 104739 / CCUG 47700 / JCM 15983 / NCTC 12856 / VPB 4874</strain>
    </source>
</reference>
<sequence length="1159" mass="128397">VLRYRGIVCDRCGVEVTEKKVRRERMGHIALEVPVAHIWFFRSIPNKIAYLLGIPSKKLDAIIYYERYAVIQPGTVEGLAAGDLLTEEEYLDILDSLPEGNQDLEDDAPEKFIAKIGAEAIYDLLCRVDLDKLSYELRAKASKDSSQQRKKEALKRLQVVESFRASEGYSRPEWMVMKVIPVIPPELHTLVPLDGGRFATSDLNELCRRVIIRNNRLRRLIEQRAPQVILRNEKRMLQEAVDSFFDNSSKAGAVKSDSNRPLKSLTDSLKGKQGRFRQNLLGKRVDYSGRSVIVVGPEPKMHECGLPKYMAAELYKPFVIRKLLERGIVKTVKSARRIVDKKGPEVWDILEHVIKGHPVLLNRAPTLHRLGIQAFQPKLIEGKAIQLHPLACTAFNADFDGDQMAVHLPLSNEAILEAQMLMLASHNILNPANGAPITVPSQDMVLGLYYITKLRKDAKGAGLVFYGREEATIAYNDGKVAIHAPIKVMVDDVDADGNPIRHLVETSVGRLMFNECVPQGVGYINSILGKKALRDIIGHVIKECGIAKTAKFLDDIKDLGYQMAFKGGLSFNLSDVLIPKEKDTLIQEGFAEVDEIMSNYNMGFITNNERYNQIIDTWTHVNTCLSGILMKQLSEDNEGFNSIFMMMDSGARGSKDQINQLSGIRGLMAKPQKSGTEGRTLLENPILSNFKEGLSVLEYFISTHGARKGLSDTALKTAECGYLTRRLVDVSQDVIVTEEDCGTLRGLVTEEIKEGDVVIASLYERILGRVSVHDVIHPNTGEVIVKAGEEINEKAATIIQDSPITNVEIRSVLTCESKKGVCAKCYGRNLSQGHMVHIGEVVGVVAAQSIGEPGTQLTLRTFHTGGIASNIGSEKYVKAKYDGILEIDELRTVDAKDEEGNAYQVVVGRLAEMRVIDENTRMTLITHHIPYGSKLYFKPGDKVKKDDNIFESDPFNAVIIAEETGKLKFEDVVENVTYKVEYDSNVSAGHKEHIIIESKDKNLSPSVSILNSKGDILRTYNLPVGAHFVKSNGDSVKTGDVLVKIPRSTLKGGDITGGLPRVTELFEARNPTNPAIVAEIDGEVSLGRVRRGNREVTITSKLGEERKYLIPLSKQLLIQENDYVRAGMPLSDGAITPADILAIKGPNAVQDYIVNGVQD</sequence>